<proteinExistence type="inferred from homology"/>
<feature type="signal peptide" evidence="2">
    <location>
        <begin position="1"/>
        <end position="38"/>
    </location>
</feature>
<feature type="chain" id="PRO_0000367934" description="Common pilus major fimbrillin subunit EcpA">
    <location>
        <begin position="39"/>
        <end position="211"/>
    </location>
</feature>
<name>ECPA_SHIBS</name>
<organism>
    <name type="scientific">Shigella boydii serotype 4 (strain Sb227)</name>
    <dbReference type="NCBI Taxonomy" id="300268"/>
    <lineage>
        <taxon>Bacteria</taxon>
        <taxon>Pseudomonadati</taxon>
        <taxon>Pseudomonadota</taxon>
        <taxon>Gammaproteobacteria</taxon>
        <taxon>Enterobacterales</taxon>
        <taxon>Enterobacteriaceae</taxon>
        <taxon>Shigella</taxon>
    </lineage>
</organism>
<reference key="1">
    <citation type="journal article" date="2005" name="Nucleic Acids Res.">
        <title>Genome dynamics and diversity of Shigella species, the etiologic agents of bacillary dysentery.</title>
        <authorList>
            <person name="Yang F."/>
            <person name="Yang J."/>
            <person name="Zhang X."/>
            <person name="Chen L."/>
            <person name="Jiang Y."/>
            <person name="Yan Y."/>
            <person name="Tang X."/>
            <person name="Wang J."/>
            <person name="Xiong Z."/>
            <person name="Dong J."/>
            <person name="Xue Y."/>
            <person name="Zhu Y."/>
            <person name="Xu X."/>
            <person name="Sun L."/>
            <person name="Chen S."/>
            <person name="Nie H."/>
            <person name="Peng J."/>
            <person name="Xu J."/>
            <person name="Wang Y."/>
            <person name="Yuan Z."/>
            <person name="Wen Y."/>
            <person name="Yao Z."/>
            <person name="Shen Y."/>
            <person name="Qiang B."/>
            <person name="Hou Y."/>
            <person name="Yu J."/>
            <person name="Jin Q."/>
        </authorList>
    </citation>
    <scope>NUCLEOTIDE SEQUENCE [LARGE SCALE GENOMIC DNA]</scope>
    <source>
        <strain>Sb227</strain>
    </source>
</reference>
<evidence type="ECO:0000250" key="1"/>
<evidence type="ECO:0000255" key="2"/>
<evidence type="ECO:0000305" key="3"/>
<keyword id="KW-0281">Fimbrium</keyword>
<keyword id="KW-0732">Signal</keyword>
<dbReference type="EMBL" id="CP000036">
    <property type="protein sequence ID" value="ABB64944.1"/>
    <property type="molecule type" value="Genomic_DNA"/>
</dbReference>
<dbReference type="RefSeq" id="WP_000150121.1">
    <property type="nucleotide sequence ID" value="NC_007613.1"/>
</dbReference>
<dbReference type="SMR" id="Q325R4"/>
<dbReference type="KEGG" id="sbo:SBO_0226"/>
<dbReference type="HOGENOM" id="CLU_120328_0_0_6"/>
<dbReference type="Proteomes" id="UP000007067">
    <property type="component" value="Chromosome"/>
</dbReference>
<dbReference type="GO" id="GO:0009289">
    <property type="term" value="C:pilus"/>
    <property type="evidence" value="ECO:0007669"/>
    <property type="project" value="UniProtKB-SubCell"/>
</dbReference>
<dbReference type="Gene3D" id="2.60.40.3290">
    <property type="entry name" value="Fimbrial protein EcpA"/>
    <property type="match status" value="1"/>
</dbReference>
<dbReference type="InterPro" id="IPR016514">
    <property type="entry name" value="EcpA"/>
</dbReference>
<dbReference type="InterPro" id="IPR038478">
    <property type="entry name" value="Fimbrillin_EcpA_sf"/>
</dbReference>
<dbReference type="Pfam" id="PF16449">
    <property type="entry name" value="MatB"/>
    <property type="match status" value="1"/>
</dbReference>
<dbReference type="PIRSF" id="PIRSF007320">
    <property type="entry name" value="Fimbrillin_MatB"/>
    <property type="match status" value="1"/>
</dbReference>
<accession>Q325R4</accession>
<comment type="function">
    <text evidence="1">Part of the ecpRABCDE operon, which encodes the E.coli common pilus (ECP). ECP plays a dual role in early-stage biofilm development and host cell recognition. Major subunit of the fimbria (By similarity).</text>
</comment>
<comment type="subunit">
    <text evidence="1">Self-associates. Forms filaments. Interacts with EcpD (By similarity).</text>
</comment>
<comment type="subcellular location">
    <subcellularLocation>
        <location evidence="1">Fimbrium</location>
    </subcellularLocation>
</comment>
<comment type="induction">
    <text evidence="1">Positively regulated by EcpR.</text>
</comment>
<comment type="similarity">
    <text evidence="3">Belongs to the EcpA/MatB fimbrillin family.</text>
</comment>
<sequence length="211" mass="21915">MTHWDITSSIQLGKKCNEKKVLAIALVTVFTGMGVAQAADVTAQAVATWSATAKKDTTSNLVVTSLGSLAFQYAEGIKGFNSQKGLFDVAIEGDSTATAFKLTSRLITNTLTQLDTSGSTLNVGVDYNGAAVEKTGDTVMIDTANGVLGGNLSPLANGYNASNRTTAQDGFTFTIISGTTNGTTAVTDYSTLPEGIWSGDVSVQFDATWTS</sequence>
<protein>
    <recommendedName>
        <fullName>Common pilus major fimbrillin subunit EcpA</fullName>
    </recommendedName>
    <alternativeName>
        <fullName>MatB fimbrillin</fullName>
    </alternativeName>
</protein>
<gene>
    <name type="primary">ecpA</name>
    <name type="synonym">matB</name>
    <name type="ordered locus">SBO_0226</name>
</gene>